<keyword id="KW-0105">Cadmium resistance</keyword>
<keyword id="KW-0997">Cell inner membrane</keyword>
<keyword id="KW-1003">Cell membrane</keyword>
<keyword id="KW-0170">Cobalt</keyword>
<keyword id="KW-0175">Coiled coil</keyword>
<keyword id="KW-0472">Membrane</keyword>
<keyword id="KW-0614">Plasmid</keyword>
<keyword id="KW-1185">Reference proteome</keyword>
<keyword id="KW-0812">Transmembrane</keyword>
<keyword id="KW-1133">Transmembrane helix</keyword>
<keyword id="KW-0813">Transport</keyword>
<keyword id="KW-0862">Zinc</keyword>
<protein>
    <recommendedName>
        <fullName>Cobalt-zinc-cadmium resistance protein CzcB</fullName>
    </recommendedName>
    <alternativeName>
        <fullName>Cation efflux system protein CzcB</fullName>
    </alternativeName>
</protein>
<evidence type="ECO:0000255" key="1"/>
<evidence type="ECO:0000256" key="2">
    <source>
        <dbReference type="SAM" id="MobiDB-lite"/>
    </source>
</evidence>
<evidence type="ECO:0000269" key="3">
    <source>
    </source>
</evidence>
<evidence type="ECO:0000305" key="4"/>
<sequence length="520" mass="54631">MAISNKQKAAIAAIVLVGGVATGGVLLSGRSAPEEQGGHSESKGHGDTEHHGKQAAEADHKDDKSHGDGEHHEVKKGPNGGALFSRDGYDVEIGTAESKGEARIRLWVSKSGKAVANGVAATGQLVRATGESQALKFVVSGDALESQQPVAEPHVFDVTANVTLPGSSSPLAVRLSKEEGKIELTADQLAKTGVVVQTAGSAKVQAGVQFPGEIRFNEDKTAHVVPRLAGVVESVPANIGQQVKKGQVLAVIASTGLSDQRSELLAAQKRLDLARVTYDREKKLWEQKISAEQDYLSARNALQEAQISVQNAQQKLTAIGASNSSTALNRYELRAPFDGMIVEKHISLGEAVADNANVFTLSDLSSVWAEFVVSAKDVERVRIGEKASINSASSDVKADGTVSYVGSLLGEQTRTAKARVTLTNPQMAWRPGLFVTVDVFGADVEVPVAVKTEAVQDVNGESVVFVAVQGGFVPQPVKVGRTNGKVIEIVEGLKPGARYAAANSFVLKAELGKSSAEHGH</sequence>
<name>CZCB_CUPMC</name>
<dbReference type="EMBL" id="X98451">
    <property type="protein sequence ID" value="CAA67083.1"/>
    <property type="molecule type" value="Genomic_DNA"/>
</dbReference>
<dbReference type="EMBL" id="X71400">
    <property type="protein sequence ID" value="CAI11243.1"/>
    <property type="molecule type" value="Genomic_DNA"/>
</dbReference>
<dbReference type="EMBL" id="CP000354">
    <property type="protein sequence ID" value="ABF12840.1"/>
    <property type="molecule type" value="Genomic_DNA"/>
</dbReference>
<dbReference type="PIR" id="B33830">
    <property type="entry name" value="B33830"/>
</dbReference>
<dbReference type="RefSeq" id="WP_004635340.1">
    <property type="nucleotide sequence ID" value="NC_007971.2"/>
</dbReference>
<dbReference type="RefSeq" id="YP_145594.1">
    <property type="nucleotide sequence ID" value="NC_006466.1"/>
</dbReference>
<dbReference type="SMR" id="P13510"/>
<dbReference type="TCDB" id="2.A.6.1.2">
    <property type="family name" value="the resistance-nodulation-cell division (rnd) superfamily"/>
</dbReference>
<dbReference type="GeneID" id="98407035"/>
<dbReference type="KEGG" id="rme:Rmet_5981"/>
<dbReference type="HOGENOM" id="CLU_018816_13_0_4"/>
<dbReference type="PRO" id="PR:P13510"/>
<dbReference type="Proteomes" id="UP000002429">
    <property type="component" value="Plasmid pMOL30"/>
</dbReference>
<dbReference type="GO" id="GO:0030288">
    <property type="term" value="C:outer membrane-bounded periplasmic space"/>
    <property type="evidence" value="ECO:0007669"/>
    <property type="project" value="TreeGrafter"/>
</dbReference>
<dbReference type="GO" id="GO:0005886">
    <property type="term" value="C:plasma membrane"/>
    <property type="evidence" value="ECO:0007669"/>
    <property type="project" value="UniProtKB-SubCell"/>
</dbReference>
<dbReference type="GO" id="GO:0046873">
    <property type="term" value="F:metal ion transmembrane transporter activity"/>
    <property type="evidence" value="ECO:0007669"/>
    <property type="project" value="InterPro"/>
</dbReference>
<dbReference type="GO" id="GO:0046914">
    <property type="term" value="F:transition metal ion binding"/>
    <property type="evidence" value="ECO:0007669"/>
    <property type="project" value="TreeGrafter"/>
</dbReference>
<dbReference type="GO" id="GO:0060003">
    <property type="term" value="P:copper ion export"/>
    <property type="evidence" value="ECO:0007669"/>
    <property type="project" value="TreeGrafter"/>
</dbReference>
<dbReference type="GO" id="GO:0015679">
    <property type="term" value="P:plasma membrane copper ion transport"/>
    <property type="evidence" value="ECO:0007669"/>
    <property type="project" value="TreeGrafter"/>
</dbReference>
<dbReference type="GO" id="GO:0046686">
    <property type="term" value="P:response to cadmium ion"/>
    <property type="evidence" value="ECO:0007669"/>
    <property type="project" value="UniProtKB-KW"/>
</dbReference>
<dbReference type="FunFam" id="2.40.30.170:FF:000010">
    <property type="entry name" value="Efflux RND transporter periplasmic adaptor subunit"/>
    <property type="match status" value="1"/>
</dbReference>
<dbReference type="FunFam" id="2.40.420.20:FF:000006">
    <property type="entry name" value="RND family efflux transporter MFP subunit"/>
    <property type="match status" value="1"/>
</dbReference>
<dbReference type="Gene3D" id="2.40.30.170">
    <property type="match status" value="1"/>
</dbReference>
<dbReference type="Gene3D" id="2.40.420.20">
    <property type="match status" value="1"/>
</dbReference>
<dbReference type="Gene3D" id="2.40.50.100">
    <property type="match status" value="1"/>
</dbReference>
<dbReference type="Gene3D" id="1.10.287.470">
    <property type="entry name" value="Helix hairpin bin"/>
    <property type="match status" value="1"/>
</dbReference>
<dbReference type="InterPro" id="IPR005695">
    <property type="entry name" value="Co/Zn/Cd_resistance_CzcB-like"/>
</dbReference>
<dbReference type="InterPro" id="IPR043602">
    <property type="entry name" value="CusB-like_dom_1"/>
</dbReference>
<dbReference type="InterPro" id="IPR032317">
    <property type="entry name" value="CusB_D23"/>
</dbReference>
<dbReference type="InterPro" id="IPR051909">
    <property type="entry name" value="MFP_Cation_Efflux"/>
</dbReference>
<dbReference type="InterPro" id="IPR006143">
    <property type="entry name" value="RND_pump_MFP"/>
</dbReference>
<dbReference type="NCBIfam" id="TIGR00999">
    <property type="entry name" value="8a0102"/>
    <property type="match status" value="1"/>
</dbReference>
<dbReference type="NCBIfam" id="TIGR01730">
    <property type="entry name" value="RND_mfp"/>
    <property type="match status" value="1"/>
</dbReference>
<dbReference type="PANTHER" id="PTHR30097">
    <property type="entry name" value="CATION EFFLUX SYSTEM PROTEIN CUSB"/>
    <property type="match status" value="1"/>
</dbReference>
<dbReference type="PANTHER" id="PTHR30097:SF4">
    <property type="entry name" value="SLR6042 PROTEIN"/>
    <property type="match status" value="1"/>
</dbReference>
<dbReference type="Pfam" id="PF00529">
    <property type="entry name" value="CusB_dom_1"/>
    <property type="match status" value="1"/>
</dbReference>
<dbReference type="Pfam" id="PF16576">
    <property type="entry name" value="HlyD_D23"/>
    <property type="match status" value="1"/>
</dbReference>
<dbReference type="SUPFAM" id="SSF111369">
    <property type="entry name" value="HlyD-like secretion proteins"/>
    <property type="match status" value="1"/>
</dbReference>
<geneLocation type="plasmid">
    <name>pMOL30</name>
</geneLocation>
<comment type="function">
    <text>CzcA and CzcB together would act in zinc efflux nearly as effectively as the complete czc efflux system (CzcABC). The CzcB protein is thought to funnel zinc cations to the CzcA transport protein.</text>
</comment>
<comment type="subcellular location">
    <subcellularLocation>
        <location evidence="4">Cell inner membrane</location>
        <topology evidence="4">Single-pass membrane protein</topology>
    </subcellularLocation>
    <text>May be anchored in the inner membrane, cross the periplasm and contact the outer membrane as proposed for membrane fusion proteins.</text>
</comment>
<comment type="induction">
    <text evidence="3">By zinc, cadmium and cobalt (zinc being the best and cobalt being the worst inducer).</text>
</comment>
<comment type="biotechnology">
    <text evidence="3">In the presence of 2 mM Cd(2+) or 4-10 mM Zn(2+) up to 99% of the metal is removed from the culture supernatant and is sequestered via bioprecipitation. Additionally Cu(2+), Co(2+), Ni(2+), Pb(2+), Y(3+) and Ge(4+) can also be removed from culture supernatants, although it is not clear which efflux system is responsible for all these substrates (PubMed:7766206).</text>
</comment>
<comment type="similarity">
    <text evidence="4">Belongs to the membrane fusion protein (MFP) (TC 8.A.1) family.</text>
</comment>
<proteinExistence type="evidence at protein level"/>
<accession>P13510</accession>
<accession>Q58AM4</accession>
<gene>
    <name type="primary">czcB</name>
    <name type="ordered locus">Rmet_5981</name>
</gene>
<reference key="1">
    <citation type="journal article" date="1989" name="Proc. Natl. Acad. Sci. U.S.A.">
        <title>Expression and nucleotide sequence of a plasmid-determined divalent cation efflux system from Alcaligenes eutrophus.</title>
        <authorList>
            <person name="Nies D.H."/>
            <person name="Nies A."/>
            <person name="Chu L."/>
            <person name="Silver S."/>
        </authorList>
    </citation>
    <scope>NUCLEOTIDE SEQUENCE [GENOMIC DNA]</scope>
</reference>
<reference key="2">
    <citation type="submission" date="1996-06" db="EMBL/GenBank/DDBJ databases">
        <authorList>
            <person name="van der Lelie D."/>
            <person name="Schwuchow T."/>
            <person name="Wuertz S."/>
            <person name="Schwidetzky U."/>
            <person name="Baeyens W."/>
            <person name="Scheel P.O."/>
            <person name="Nies D.H."/>
        </authorList>
    </citation>
    <scope>SEQUENCE REVISION</scope>
</reference>
<reference key="3">
    <citation type="submission" date="2004-11" db="EMBL/GenBank/DDBJ databases">
        <title>Sequence and features of the Ralstonia metallidurans CH34 heavy metals plasmids pMOL28 and pMOL30.</title>
        <authorList>
            <person name="Monchy S."/>
            <person name="van der Lelie D."/>
            <person name="Vallaeys T."/>
            <person name="Taghavi S."/>
            <person name="Benotmane M."/>
            <person name="McCorkle S."/>
            <person name="Dunn J."/>
            <person name="Lapidus A."/>
            <person name="Mergeay M."/>
        </authorList>
    </citation>
    <scope>NUCLEOTIDE SEQUENCE [LARGE SCALE GENOMIC DNA]</scope>
</reference>
<reference key="4">
    <citation type="journal article" date="2010" name="PLoS ONE">
        <title>The complete genome sequence of Cupriavidus metallidurans strain CH34, a master survivalist in harsh and anthropogenic environments.</title>
        <authorList>
            <person name="Janssen P.J."/>
            <person name="Van Houdt R."/>
            <person name="Moors H."/>
            <person name="Monsieurs P."/>
            <person name="Morin N."/>
            <person name="Michaux A."/>
            <person name="Benotmane M.A."/>
            <person name="Leys N."/>
            <person name="Vallaeys T."/>
            <person name="Lapidus A."/>
            <person name="Monchy S."/>
            <person name="Medigue C."/>
            <person name="Taghavi S."/>
            <person name="McCorkle S."/>
            <person name="Dunn J."/>
            <person name="van der Lelie D."/>
            <person name="Mergeay M."/>
        </authorList>
    </citation>
    <scope>NUCLEOTIDE SEQUENCE [LARGE SCALE GENOMIC DNA]</scope>
    <source>
        <strain>ATCC 43123 / DSM 2839 / NBRC 102507 / CH34</strain>
    </source>
</reference>
<reference key="5">
    <citation type="journal article" date="1995" name="J. Ind. Microbiol.">
        <title>The czc operon of Alcaligenes eutrophus CH34: from resistance mechanism to the removal of heavy metals.</title>
        <authorList>
            <person name="Diels L."/>
            <person name="Dong Q."/>
            <person name="van der Lelie D."/>
            <person name="Baeyens W."/>
            <person name="Mergeay M."/>
        </authorList>
    </citation>
    <scope>CHARACTERIZATION</scope>
    <scope>INDUCTION</scope>
    <scope>POSSIBLE MODE OF ACTION</scope>
</reference>
<feature type="chain" id="PRO_0000201867" description="Cobalt-zinc-cadmium resistance protein CzcB">
    <location>
        <begin position="1"/>
        <end position="520"/>
    </location>
</feature>
<feature type="transmembrane region" description="Helical" evidence="1">
    <location>
        <begin position="9"/>
        <end position="29"/>
    </location>
</feature>
<feature type="region of interest" description="Disordered" evidence="2">
    <location>
        <begin position="28"/>
        <end position="85"/>
    </location>
</feature>
<feature type="coiled-coil region" evidence="1">
    <location>
        <begin position="286"/>
        <end position="320"/>
    </location>
</feature>
<feature type="compositionally biased region" description="Basic and acidic residues" evidence="2">
    <location>
        <begin position="32"/>
        <end position="76"/>
    </location>
</feature>
<feature type="sequence conflict" description="In Ref. 1; CAA67083." evidence="4" ref="1">
    <original>D</original>
    <variation>A</variation>
    <location>
        <position position="338"/>
    </location>
</feature>
<organism>
    <name type="scientific">Cupriavidus metallidurans (strain ATCC 43123 / DSM 2839 / NBRC 102507 / CH34)</name>
    <name type="common">Ralstonia metallidurans</name>
    <dbReference type="NCBI Taxonomy" id="266264"/>
    <lineage>
        <taxon>Bacteria</taxon>
        <taxon>Pseudomonadati</taxon>
        <taxon>Pseudomonadota</taxon>
        <taxon>Betaproteobacteria</taxon>
        <taxon>Burkholderiales</taxon>
        <taxon>Burkholderiaceae</taxon>
        <taxon>Cupriavidus</taxon>
    </lineage>
</organism>